<dbReference type="EMBL" id="CP000849">
    <property type="protein sequence ID" value="ABV78888.1"/>
    <property type="molecule type" value="Genomic_DNA"/>
</dbReference>
<dbReference type="RefSeq" id="WP_011477532.1">
    <property type="nucleotide sequence ID" value="NC_009883.1"/>
</dbReference>
<dbReference type="SMR" id="A8GVL1"/>
<dbReference type="KEGG" id="rbo:A1I_02570"/>
<dbReference type="HOGENOM" id="CLU_129938_2_0_5"/>
<dbReference type="GO" id="GO:1990904">
    <property type="term" value="C:ribonucleoprotein complex"/>
    <property type="evidence" value="ECO:0007669"/>
    <property type="project" value="UniProtKB-KW"/>
</dbReference>
<dbReference type="GO" id="GO:0005840">
    <property type="term" value="C:ribosome"/>
    <property type="evidence" value="ECO:0007669"/>
    <property type="project" value="UniProtKB-KW"/>
</dbReference>
<dbReference type="GO" id="GO:0003735">
    <property type="term" value="F:structural constituent of ribosome"/>
    <property type="evidence" value="ECO:0007669"/>
    <property type="project" value="InterPro"/>
</dbReference>
<dbReference type="GO" id="GO:0006412">
    <property type="term" value="P:translation"/>
    <property type="evidence" value="ECO:0007669"/>
    <property type="project" value="UniProtKB-UniRule"/>
</dbReference>
<dbReference type="FunFam" id="1.10.287.3980:FF:000001">
    <property type="entry name" value="Mitochondrial ribosomal protein L34"/>
    <property type="match status" value="1"/>
</dbReference>
<dbReference type="Gene3D" id="1.10.287.3980">
    <property type="match status" value="1"/>
</dbReference>
<dbReference type="HAMAP" id="MF_00391">
    <property type="entry name" value="Ribosomal_bL34"/>
    <property type="match status" value="1"/>
</dbReference>
<dbReference type="InterPro" id="IPR000271">
    <property type="entry name" value="Ribosomal_bL34"/>
</dbReference>
<dbReference type="InterPro" id="IPR020939">
    <property type="entry name" value="Ribosomal_bL34_CS"/>
</dbReference>
<dbReference type="NCBIfam" id="TIGR01030">
    <property type="entry name" value="rpmH_bact"/>
    <property type="match status" value="1"/>
</dbReference>
<dbReference type="PANTHER" id="PTHR14503:SF4">
    <property type="entry name" value="LARGE RIBOSOMAL SUBUNIT PROTEIN BL34M"/>
    <property type="match status" value="1"/>
</dbReference>
<dbReference type="PANTHER" id="PTHR14503">
    <property type="entry name" value="MITOCHONDRIAL RIBOSOMAL PROTEIN 34 FAMILY MEMBER"/>
    <property type="match status" value="1"/>
</dbReference>
<dbReference type="Pfam" id="PF00468">
    <property type="entry name" value="Ribosomal_L34"/>
    <property type="match status" value="1"/>
</dbReference>
<dbReference type="PROSITE" id="PS00784">
    <property type="entry name" value="RIBOSOMAL_L34"/>
    <property type="match status" value="1"/>
</dbReference>
<accession>A8GVL1</accession>
<reference key="1">
    <citation type="submission" date="2007-09" db="EMBL/GenBank/DDBJ databases">
        <title>Complete genome sequencing of Rickettsia bellii.</title>
        <authorList>
            <person name="Madan A."/>
            <person name="Lee H."/>
            <person name="Madan A."/>
            <person name="Yoon J.-G."/>
            <person name="Ryu G.-Y."/>
            <person name="Dasch G."/>
            <person name="Ereemeva M."/>
        </authorList>
    </citation>
    <scope>NUCLEOTIDE SEQUENCE [LARGE SCALE GENOMIC DNA]</scope>
    <source>
        <strain>OSU 85-389</strain>
    </source>
</reference>
<comment type="similarity">
    <text evidence="1">Belongs to the bacterial ribosomal protein bL34 family.</text>
</comment>
<feature type="chain" id="PRO_1000013430" description="Large ribosomal subunit protein bL34">
    <location>
        <begin position="1"/>
        <end position="44"/>
    </location>
</feature>
<evidence type="ECO:0000255" key="1">
    <source>
        <dbReference type="HAMAP-Rule" id="MF_00391"/>
    </source>
</evidence>
<evidence type="ECO:0000305" key="2"/>
<protein>
    <recommendedName>
        <fullName evidence="1">Large ribosomal subunit protein bL34</fullName>
    </recommendedName>
    <alternativeName>
        <fullName evidence="2">50S ribosomal protein L34</fullName>
    </alternativeName>
</protein>
<proteinExistence type="inferred from homology"/>
<keyword id="KW-0687">Ribonucleoprotein</keyword>
<keyword id="KW-0689">Ribosomal protein</keyword>
<gene>
    <name evidence="1" type="primary">rpmH</name>
    <name type="ordered locus">A1I_02570</name>
</gene>
<sequence>MKRTFQPSNLVRKRRHGFRARMATASGRAILRNRRAKGRKKLSA</sequence>
<organism>
    <name type="scientific">Rickettsia bellii (strain OSU 85-389)</name>
    <dbReference type="NCBI Taxonomy" id="391896"/>
    <lineage>
        <taxon>Bacteria</taxon>
        <taxon>Pseudomonadati</taxon>
        <taxon>Pseudomonadota</taxon>
        <taxon>Alphaproteobacteria</taxon>
        <taxon>Rickettsiales</taxon>
        <taxon>Rickettsiaceae</taxon>
        <taxon>Rickettsieae</taxon>
        <taxon>Rickettsia</taxon>
        <taxon>belli group</taxon>
    </lineage>
</organism>
<name>RL34_RICB8</name>